<keyword id="KW-0233">DNA recombination</keyword>
<keyword id="KW-0238">DNA-binding</keyword>
<keyword id="KW-0804">Transcription</keyword>
<keyword id="KW-0805">Transcription regulation</keyword>
<keyword id="KW-0810">Translation regulation</keyword>
<reference key="1">
    <citation type="journal article" date="2007" name="PLoS Genet.">
        <title>Genome analysis of Minibacterium massiliensis highlights the convergent evolution of water-living bacteria.</title>
        <authorList>
            <person name="Audic S."/>
            <person name="Robert C."/>
            <person name="Campagna B."/>
            <person name="Parinello H."/>
            <person name="Claverie J.-M."/>
            <person name="Raoult D."/>
            <person name="Drancourt M."/>
        </authorList>
    </citation>
    <scope>NUCLEOTIDE SEQUENCE [LARGE SCALE GENOMIC DNA]</scope>
    <source>
        <strain>Marseille</strain>
    </source>
</reference>
<organism>
    <name type="scientific">Janthinobacterium sp. (strain Marseille)</name>
    <name type="common">Minibacterium massiliensis</name>
    <dbReference type="NCBI Taxonomy" id="375286"/>
    <lineage>
        <taxon>Bacteria</taxon>
        <taxon>Pseudomonadati</taxon>
        <taxon>Pseudomonadota</taxon>
        <taxon>Betaproteobacteria</taxon>
        <taxon>Burkholderiales</taxon>
        <taxon>Oxalobacteraceae</taxon>
        <taxon>Janthinobacterium</taxon>
    </lineage>
</organism>
<proteinExistence type="inferred from homology"/>
<name>IHFB_JANMA</name>
<protein>
    <recommendedName>
        <fullName evidence="1">Integration host factor subunit beta</fullName>
        <shortName evidence="1">IHF-beta</shortName>
    </recommendedName>
</protein>
<gene>
    <name evidence="1" type="primary">ihfB</name>
    <name evidence="1" type="synonym">himD</name>
    <name type="ordered locus">mma_2667</name>
</gene>
<evidence type="ECO:0000255" key="1">
    <source>
        <dbReference type="HAMAP-Rule" id="MF_00381"/>
    </source>
</evidence>
<dbReference type="EMBL" id="CP000269">
    <property type="protein sequence ID" value="ABR89250.1"/>
    <property type="molecule type" value="Genomic_DNA"/>
</dbReference>
<dbReference type="RefSeq" id="WP_011871954.1">
    <property type="nucleotide sequence ID" value="NC_009659.1"/>
</dbReference>
<dbReference type="SMR" id="A6T1G0"/>
<dbReference type="STRING" id="375286.mma_2667"/>
<dbReference type="KEGG" id="mms:mma_2667"/>
<dbReference type="eggNOG" id="COG0776">
    <property type="taxonomic scope" value="Bacteria"/>
</dbReference>
<dbReference type="HOGENOM" id="CLU_105066_2_0_4"/>
<dbReference type="OrthoDB" id="9804203at2"/>
<dbReference type="Proteomes" id="UP000006388">
    <property type="component" value="Chromosome"/>
</dbReference>
<dbReference type="GO" id="GO:0005694">
    <property type="term" value="C:chromosome"/>
    <property type="evidence" value="ECO:0007669"/>
    <property type="project" value="InterPro"/>
</dbReference>
<dbReference type="GO" id="GO:0005829">
    <property type="term" value="C:cytosol"/>
    <property type="evidence" value="ECO:0007669"/>
    <property type="project" value="TreeGrafter"/>
</dbReference>
<dbReference type="GO" id="GO:0003677">
    <property type="term" value="F:DNA binding"/>
    <property type="evidence" value="ECO:0007669"/>
    <property type="project" value="UniProtKB-UniRule"/>
</dbReference>
<dbReference type="GO" id="GO:0030527">
    <property type="term" value="F:structural constituent of chromatin"/>
    <property type="evidence" value="ECO:0007669"/>
    <property type="project" value="InterPro"/>
</dbReference>
<dbReference type="GO" id="GO:0006310">
    <property type="term" value="P:DNA recombination"/>
    <property type="evidence" value="ECO:0007669"/>
    <property type="project" value="UniProtKB-UniRule"/>
</dbReference>
<dbReference type="GO" id="GO:0006355">
    <property type="term" value="P:regulation of DNA-templated transcription"/>
    <property type="evidence" value="ECO:0007669"/>
    <property type="project" value="UniProtKB-UniRule"/>
</dbReference>
<dbReference type="GO" id="GO:0006417">
    <property type="term" value="P:regulation of translation"/>
    <property type="evidence" value="ECO:0007669"/>
    <property type="project" value="UniProtKB-UniRule"/>
</dbReference>
<dbReference type="CDD" id="cd13836">
    <property type="entry name" value="IHF_B"/>
    <property type="match status" value="1"/>
</dbReference>
<dbReference type="Gene3D" id="4.10.520.10">
    <property type="entry name" value="IHF-like DNA-binding proteins"/>
    <property type="match status" value="1"/>
</dbReference>
<dbReference type="HAMAP" id="MF_00381">
    <property type="entry name" value="IHF_beta"/>
    <property type="match status" value="1"/>
</dbReference>
<dbReference type="InterPro" id="IPR000119">
    <property type="entry name" value="Hist_DNA-bd"/>
</dbReference>
<dbReference type="InterPro" id="IPR010992">
    <property type="entry name" value="IHF-like_DNA-bd_dom_sf"/>
</dbReference>
<dbReference type="InterPro" id="IPR005685">
    <property type="entry name" value="IHF_beta"/>
</dbReference>
<dbReference type="NCBIfam" id="TIGR00988">
    <property type="entry name" value="hip"/>
    <property type="match status" value="1"/>
</dbReference>
<dbReference type="NCBIfam" id="NF001222">
    <property type="entry name" value="PRK00199.1"/>
    <property type="match status" value="1"/>
</dbReference>
<dbReference type="PANTHER" id="PTHR33175">
    <property type="entry name" value="DNA-BINDING PROTEIN HU"/>
    <property type="match status" value="1"/>
</dbReference>
<dbReference type="PANTHER" id="PTHR33175:SF5">
    <property type="entry name" value="INTEGRATION HOST FACTOR SUBUNIT BETA"/>
    <property type="match status" value="1"/>
</dbReference>
<dbReference type="Pfam" id="PF00216">
    <property type="entry name" value="Bac_DNA_binding"/>
    <property type="match status" value="1"/>
</dbReference>
<dbReference type="PRINTS" id="PR01727">
    <property type="entry name" value="DNABINDINGHU"/>
</dbReference>
<dbReference type="SMART" id="SM00411">
    <property type="entry name" value="BHL"/>
    <property type="match status" value="1"/>
</dbReference>
<dbReference type="SUPFAM" id="SSF47729">
    <property type="entry name" value="IHF-like DNA-binding proteins"/>
    <property type="match status" value="1"/>
</dbReference>
<comment type="function">
    <text evidence="1">This protein is one of the two subunits of integration host factor, a specific DNA-binding protein that functions in genetic recombination as well as in transcriptional and translational control.</text>
</comment>
<comment type="subunit">
    <text evidence="1">Heterodimer of an alpha and a beta chain.</text>
</comment>
<comment type="similarity">
    <text evidence="1">Belongs to the bacterial histone-like protein family.</text>
</comment>
<sequence length="101" mass="11260">MTKSELIARLAERYPQLVAKDADYAVKTILDAMSDALATGQRIEIRGFGSFALNSRPPRIGRNPKSGDKVMVPEKRVPHFKPGKQLRERVDAMVGQPIIED</sequence>
<feature type="chain" id="PRO_1000060612" description="Integration host factor subunit beta">
    <location>
        <begin position="1"/>
        <end position="101"/>
    </location>
</feature>
<accession>A6T1G0</accession>